<feature type="chain" id="PRO_0000058279" description="Sister chromatid cohesion protein pds5">
    <location>
        <begin position="1"/>
        <end position="1205"/>
    </location>
</feature>
<feature type="region of interest" description="Disordered" evidence="1">
    <location>
        <begin position="1111"/>
        <end position="1205"/>
    </location>
</feature>
<feature type="compositionally biased region" description="Polar residues" evidence="1">
    <location>
        <begin position="1111"/>
        <end position="1123"/>
    </location>
</feature>
<feature type="compositionally biased region" description="Basic residues" evidence="1">
    <location>
        <begin position="1124"/>
        <end position="1133"/>
    </location>
</feature>
<feature type="compositionally biased region" description="Basic residues" evidence="1">
    <location>
        <begin position="1140"/>
        <end position="1151"/>
    </location>
</feature>
<feature type="compositionally biased region" description="Acidic residues" evidence="1">
    <location>
        <begin position="1186"/>
        <end position="1205"/>
    </location>
</feature>
<feature type="sequence conflict" description="In Ref. 3; AAD02493." evidence="6" ref="3">
    <original>TMC</original>
    <variation>GTS</variation>
    <location>
        <begin position="816"/>
        <end position="818"/>
    </location>
</feature>
<feature type="sequence conflict" description="In Ref. 3; AAD02493." evidence="6" ref="3">
    <original>QISLLCQ</original>
    <variation>SNLLIMP</variation>
    <location>
        <begin position="902"/>
        <end position="908"/>
    </location>
</feature>
<accession>Q9HFF5</accession>
<accession>O94237</accession>
<organism>
    <name type="scientific">Schizosaccharomyces pombe (strain 972 / ATCC 24843)</name>
    <name type="common">Fission yeast</name>
    <dbReference type="NCBI Taxonomy" id="284812"/>
    <lineage>
        <taxon>Eukaryota</taxon>
        <taxon>Fungi</taxon>
        <taxon>Dikarya</taxon>
        <taxon>Ascomycota</taxon>
        <taxon>Taphrinomycotina</taxon>
        <taxon>Schizosaccharomycetes</taxon>
        <taxon>Schizosaccharomycetales</taxon>
        <taxon>Schizosaccharomycetaceae</taxon>
        <taxon>Schizosaccharomyces</taxon>
    </lineage>
</organism>
<name>PDS5_SCHPO</name>
<dbReference type="EMBL" id="AB067651">
    <property type="protein sequence ID" value="BAB71784.1"/>
    <property type="molecule type" value="mRNA"/>
</dbReference>
<dbReference type="EMBL" id="CU329670">
    <property type="protein sequence ID" value="CAC08560.1"/>
    <property type="molecule type" value="Genomic_DNA"/>
</dbReference>
<dbReference type="EMBL" id="AF049529">
    <property type="protein sequence ID" value="AAD02493.1"/>
    <property type="molecule type" value="mRNA"/>
</dbReference>
<dbReference type="PIR" id="T43647">
    <property type="entry name" value="T43647"/>
</dbReference>
<dbReference type="RefSeq" id="NP_593535.1">
    <property type="nucleotide sequence ID" value="NM_001018969.2"/>
</dbReference>
<dbReference type="SMR" id="Q9HFF5"/>
<dbReference type="BioGRID" id="278124">
    <property type="interactions" value="120"/>
</dbReference>
<dbReference type="FunCoup" id="Q9HFF5">
    <property type="interactions" value="616"/>
</dbReference>
<dbReference type="IntAct" id="Q9HFF5">
    <property type="interactions" value="2"/>
</dbReference>
<dbReference type="STRING" id="284812.Q9HFF5"/>
<dbReference type="PaxDb" id="4896-SPAC110.02.1"/>
<dbReference type="EnsemblFungi" id="SPAC110.02.1">
    <property type="protein sequence ID" value="SPAC110.02.1:pep"/>
    <property type="gene ID" value="SPAC110.02"/>
</dbReference>
<dbReference type="GeneID" id="2541628"/>
<dbReference type="KEGG" id="spo:2541628"/>
<dbReference type="PomBase" id="SPAC110.02">
    <property type="gene designation" value="pds5"/>
</dbReference>
<dbReference type="VEuPathDB" id="FungiDB:SPAC110.02"/>
<dbReference type="eggNOG" id="KOG1525">
    <property type="taxonomic scope" value="Eukaryota"/>
</dbReference>
<dbReference type="HOGENOM" id="CLU_002562_1_0_1"/>
<dbReference type="InParanoid" id="Q9HFF5"/>
<dbReference type="OMA" id="YPPAYNM"/>
<dbReference type="PhylomeDB" id="Q9HFF5"/>
<dbReference type="Reactome" id="R-SPO-2470946">
    <property type="pathway name" value="Cohesin Loading onto Chromatin"/>
</dbReference>
<dbReference type="Reactome" id="R-SPO-2500257">
    <property type="pathway name" value="Resolution of Sister Chromatid Cohesion"/>
</dbReference>
<dbReference type="PRO" id="PR:Q9HFF5"/>
<dbReference type="Proteomes" id="UP000002485">
    <property type="component" value="Chromosome I"/>
</dbReference>
<dbReference type="GO" id="GO:0000785">
    <property type="term" value="C:chromatin"/>
    <property type="evidence" value="ECO:0000314"/>
    <property type="project" value="PomBase"/>
</dbReference>
<dbReference type="GO" id="GO:0099115">
    <property type="term" value="C:chromosome, subtelomeric region"/>
    <property type="evidence" value="ECO:0000314"/>
    <property type="project" value="PomBase"/>
</dbReference>
<dbReference type="GO" id="GO:0031934">
    <property type="term" value="C:mating-type region heterochromatin"/>
    <property type="evidence" value="ECO:0000314"/>
    <property type="project" value="PomBase"/>
</dbReference>
<dbReference type="GO" id="GO:0000228">
    <property type="term" value="C:nuclear chromosome"/>
    <property type="evidence" value="ECO:0000314"/>
    <property type="project" value="PomBase"/>
</dbReference>
<dbReference type="GO" id="GO:0005634">
    <property type="term" value="C:nucleus"/>
    <property type="evidence" value="ECO:0000314"/>
    <property type="project" value="PomBase"/>
</dbReference>
<dbReference type="GO" id="GO:0005721">
    <property type="term" value="C:pericentric heterochromatin"/>
    <property type="evidence" value="ECO:0000314"/>
    <property type="project" value="PomBase"/>
</dbReference>
<dbReference type="GO" id="GO:0090695">
    <property type="term" value="C:Wpl/Pds5 cohesin loading/unloading complex"/>
    <property type="evidence" value="ECO:0000269"/>
    <property type="project" value="PomBase"/>
</dbReference>
<dbReference type="GO" id="GO:0140463">
    <property type="term" value="F:chromatin-protein adaptor activity"/>
    <property type="evidence" value="ECO:0000353"/>
    <property type="project" value="PomBase"/>
</dbReference>
<dbReference type="GO" id="GO:0003677">
    <property type="term" value="F:DNA binding"/>
    <property type="evidence" value="ECO:0000314"/>
    <property type="project" value="PomBase"/>
</dbReference>
<dbReference type="GO" id="GO:0051456">
    <property type="term" value="P:attachment of meiotic spindle microtubules to meiosis II kinetochore"/>
    <property type="evidence" value="ECO:0000315"/>
    <property type="project" value="PomBase"/>
</dbReference>
<dbReference type="GO" id="GO:0051301">
    <property type="term" value="P:cell division"/>
    <property type="evidence" value="ECO:0007669"/>
    <property type="project" value="UniProtKB-KW"/>
</dbReference>
<dbReference type="GO" id="GO:0006281">
    <property type="term" value="P:DNA repair"/>
    <property type="evidence" value="ECO:0000318"/>
    <property type="project" value="GO_Central"/>
</dbReference>
<dbReference type="GO" id="GO:0007064">
    <property type="term" value="P:mitotic sister chromatid cohesion"/>
    <property type="evidence" value="ECO:0000314"/>
    <property type="project" value="PomBase"/>
</dbReference>
<dbReference type="CDD" id="cd19953">
    <property type="entry name" value="PDS5"/>
    <property type="match status" value="1"/>
</dbReference>
<dbReference type="Gene3D" id="1.25.10.10">
    <property type="entry name" value="Leucine-rich Repeat Variant"/>
    <property type="match status" value="1"/>
</dbReference>
<dbReference type="InterPro" id="IPR011989">
    <property type="entry name" value="ARM-like"/>
</dbReference>
<dbReference type="InterPro" id="IPR016024">
    <property type="entry name" value="ARM-type_fold"/>
</dbReference>
<dbReference type="InterPro" id="IPR039776">
    <property type="entry name" value="Pds5"/>
</dbReference>
<dbReference type="PANTHER" id="PTHR12663">
    <property type="entry name" value="ANDROGEN INDUCED INHIBITOR OF PROLIFERATION AS3 / PDS5-RELATED"/>
    <property type="match status" value="1"/>
</dbReference>
<dbReference type="PANTHER" id="PTHR12663:SF0">
    <property type="entry name" value="PRECOCIOUS DISSOCIATION OF SISTERS 5, ISOFORM A"/>
    <property type="match status" value="1"/>
</dbReference>
<dbReference type="Pfam" id="PF20168">
    <property type="entry name" value="PDS5"/>
    <property type="match status" value="1"/>
</dbReference>
<dbReference type="SUPFAM" id="SSF48371">
    <property type="entry name" value="ARM repeat"/>
    <property type="match status" value="1"/>
</dbReference>
<gene>
    <name type="primary">pds5</name>
    <name type="ORF">SPAC110.02</name>
</gene>
<comment type="function">
    <text evidence="2 3">Required for the establishment and maintenance of sister chromatid cohesion during S phase. Prevents their formation until eso1 is present. May also have a role during meiosis.</text>
</comment>
<comment type="subunit">
    <text evidence="2 4 5">Interacts with eso1 and hrk1 (PubMed:11598020, PubMed:20929775). Associates with sor1 (PubMed:38830897).</text>
</comment>
<comment type="subcellular location">
    <subcellularLocation>
        <location>Nucleus</location>
    </subcellularLocation>
    <subcellularLocation>
        <location>Chromosome</location>
        <location>Centromere</location>
    </subcellularLocation>
    <text>Localized to chromatin throughout the cell cycle.</text>
</comment>
<proteinExistence type="evidence at protein level"/>
<keyword id="KW-0131">Cell cycle</keyword>
<keyword id="KW-0132">Cell division</keyword>
<keyword id="KW-0137">Centromere</keyword>
<keyword id="KW-0158">Chromosome</keyword>
<keyword id="KW-0498">Mitosis</keyword>
<keyword id="KW-0539">Nucleus</keyword>
<keyword id="KW-1185">Reference proteome</keyword>
<reference key="1">
    <citation type="journal article" date="2001" name="EMBO J.">
        <title>Establishment and maintenance of sister chromatid cohesion in fission yeast by a unique mechanism.</title>
        <authorList>
            <person name="Tanaka K."/>
            <person name="Hao Z."/>
            <person name="Kai M."/>
            <person name="Okayama H."/>
        </authorList>
    </citation>
    <scope>NUCLEOTIDE SEQUENCE [MRNA]</scope>
    <scope>FUNCTION</scope>
    <scope>INTERACTION WITH ESO1</scope>
    <scope>SUBCELLULAR LOCATION</scope>
    <source>
        <strain>972 / ATCC 24843</strain>
    </source>
</reference>
<reference key="2">
    <citation type="journal article" date="2002" name="Nature">
        <title>The genome sequence of Schizosaccharomyces pombe.</title>
        <authorList>
            <person name="Wood V."/>
            <person name="Gwilliam R."/>
            <person name="Rajandream M.A."/>
            <person name="Lyne M.H."/>
            <person name="Lyne R."/>
            <person name="Stewart A."/>
            <person name="Sgouros J.G."/>
            <person name="Peat N."/>
            <person name="Hayles J."/>
            <person name="Baker S.G."/>
            <person name="Basham D."/>
            <person name="Bowman S."/>
            <person name="Brooks K."/>
            <person name="Brown D."/>
            <person name="Brown S."/>
            <person name="Chillingworth T."/>
            <person name="Churcher C.M."/>
            <person name="Collins M."/>
            <person name="Connor R."/>
            <person name="Cronin A."/>
            <person name="Davis P."/>
            <person name="Feltwell T."/>
            <person name="Fraser A."/>
            <person name="Gentles S."/>
            <person name="Goble A."/>
            <person name="Hamlin N."/>
            <person name="Harris D.E."/>
            <person name="Hidalgo J."/>
            <person name="Hodgson G."/>
            <person name="Holroyd S."/>
            <person name="Hornsby T."/>
            <person name="Howarth S."/>
            <person name="Huckle E.J."/>
            <person name="Hunt S."/>
            <person name="Jagels K."/>
            <person name="James K.D."/>
            <person name="Jones L."/>
            <person name="Jones M."/>
            <person name="Leather S."/>
            <person name="McDonald S."/>
            <person name="McLean J."/>
            <person name="Mooney P."/>
            <person name="Moule S."/>
            <person name="Mungall K.L."/>
            <person name="Murphy L.D."/>
            <person name="Niblett D."/>
            <person name="Odell C."/>
            <person name="Oliver K."/>
            <person name="O'Neil S."/>
            <person name="Pearson D."/>
            <person name="Quail M.A."/>
            <person name="Rabbinowitsch E."/>
            <person name="Rutherford K.M."/>
            <person name="Rutter S."/>
            <person name="Saunders D."/>
            <person name="Seeger K."/>
            <person name="Sharp S."/>
            <person name="Skelton J."/>
            <person name="Simmonds M.N."/>
            <person name="Squares R."/>
            <person name="Squares S."/>
            <person name="Stevens K."/>
            <person name="Taylor K."/>
            <person name="Taylor R.G."/>
            <person name="Tivey A."/>
            <person name="Walsh S.V."/>
            <person name="Warren T."/>
            <person name="Whitehead S."/>
            <person name="Woodward J.R."/>
            <person name="Volckaert G."/>
            <person name="Aert R."/>
            <person name="Robben J."/>
            <person name="Grymonprez B."/>
            <person name="Weltjens I."/>
            <person name="Vanstreels E."/>
            <person name="Rieger M."/>
            <person name="Schaefer M."/>
            <person name="Mueller-Auer S."/>
            <person name="Gabel C."/>
            <person name="Fuchs M."/>
            <person name="Duesterhoeft A."/>
            <person name="Fritzc C."/>
            <person name="Holzer E."/>
            <person name="Moestl D."/>
            <person name="Hilbert H."/>
            <person name="Borzym K."/>
            <person name="Langer I."/>
            <person name="Beck A."/>
            <person name="Lehrach H."/>
            <person name="Reinhardt R."/>
            <person name="Pohl T.M."/>
            <person name="Eger P."/>
            <person name="Zimmermann W."/>
            <person name="Wedler H."/>
            <person name="Wambutt R."/>
            <person name="Purnelle B."/>
            <person name="Goffeau A."/>
            <person name="Cadieu E."/>
            <person name="Dreano S."/>
            <person name="Gloux S."/>
            <person name="Lelaure V."/>
            <person name="Mottier S."/>
            <person name="Galibert F."/>
            <person name="Aves S.J."/>
            <person name="Xiang Z."/>
            <person name="Hunt C."/>
            <person name="Moore K."/>
            <person name="Hurst S.M."/>
            <person name="Lucas M."/>
            <person name="Rochet M."/>
            <person name="Gaillardin C."/>
            <person name="Tallada V.A."/>
            <person name="Garzon A."/>
            <person name="Thode G."/>
            <person name="Daga R.R."/>
            <person name="Cruzado L."/>
            <person name="Jimenez J."/>
            <person name="Sanchez M."/>
            <person name="del Rey F."/>
            <person name="Benito J."/>
            <person name="Dominguez A."/>
            <person name="Revuelta J.L."/>
            <person name="Moreno S."/>
            <person name="Armstrong J."/>
            <person name="Forsburg S.L."/>
            <person name="Cerutti L."/>
            <person name="Lowe T."/>
            <person name="McCombie W.R."/>
            <person name="Paulsen I."/>
            <person name="Potashkin J."/>
            <person name="Shpakovski G.V."/>
            <person name="Ussery D."/>
            <person name="Barrell B.G."/>
            <person name="Nurse P."/>
        </authorList>
    </citation>
    <scope>NUCLEOTIDE SEQUENCE [LARGE SCALE GENOMIC DNA]</scope>
    <source>
        <strain>972 / ATCC 24843</strain>
    </source>
</reference>
<reference key="3">
    <citation type="submission" date="1998-02" db="EMBL/GenBank/DDBJ databases">
        <authorList>
            <person name="Lee M."/>
            <person name="Yoo H.S."/>
            <person name="Chung K.S."/>
        </authorList>
    </citation>
    <scope>NUCLEOTIDE SEQUENCE [MRNA] OF 816-1205</scope>
</reference>
<reference key="4">
    <citation type="journal article" date="2002" name="J. Cell Sci.">
        <title>Fission yeast Pds5 is required for accurate chromosome segregation and for survival after DNA damage or metaphase arrest.</title>
        <authorList>
            <person name="Wang S.-W."/>
            <person name="Read R.L."/>
            <person name="Norbury C.J."/>
        </authorList>
    </citation>
    <scope>FUNCTION</scope>
</reference>
<reference key="5">
    <citation type="journal article" date="2010" name="Science">
        <title>Two histone marks establish the inner centromere and chromosome bi-orientation.</title>
        <authorList>
            <person name="Yamagishi Y."/>
            <person name="Honda T."/>
            <person name="Tanno Y."/>
            <person name="Watanabe Y."/>
        </authorList>
    </citation>
    <scope>SUBCELLULAR LOCATION</scope>
    <scope>INTERACTION WITH HRK1</scope>
</reference>
<reference key="6">
    <citation type="journal article" date="2024" name="Nat. Commun.">
        <title>Sororin is an evolutionary conserved antagonist of WAPL.</title>
        <authorList>
            <person name="Prusen Mota I."/>
            <person name="Galova M."/>
            <person name="Schleiffer A."/>
            <person name="Nguyen T.T."/>
            <person name="Kovacikova I."/>
            <person name="Farias Saad C."/>
            <person name="Litos G."/>
            <person name="Nishiyama T."/>
            <person name="Gregan J."/>
            <person name="Peters J.M."/>
            <person name="Schloegelhofer P."/>
        </authorList>
    </citation>
    <scope>INTERACTION WITH SOR1</scope>
</reference>
<evidence type="ECO:0000256" key="1">
    <source>
        <dbReference type="SAM" id="MobiDB-lite"/>
    </source>
</evidence>
<evidence type="ECO:0000269" key="2">
    <source>
    </source>
</evidence>
<evidence type="ECO:0000269" key="3">
    <source>
    </source>
</evidence>
<evidence type="ECO:0000269" key="4">
    <source>
    </source>
</evidence>
<evidence type="ECO:0000269" key="5">
    <source>
    </source>
</evidence>
<evidence type="ECO:0000305" key="6"/>
<protein>
    <recommendedName>
        <fullName>Sister chromatid cohesion protein pds5</fullName>
    </recommendedName>
    <alternativeName>
        <fullName>Precocious dissociation of sisters protein 5</fullName>
    </alternativeName>
</protein>
<sequence length="1205" mass="138875">MIKLQFQRNIVPTHDNPLTTSEILKRLRDLLGELTSLSQDTIDRDSVLPVARSLVNNNLLHHKDKGIRSYTLCCIVELLRLCAPDAPFTLSQLEDIFQVILKILSGLMNQESTYYPQIYEILESLSNVKSAVLIVDLPNAEEFLVNIFRLFFDLARKGTTKNVEFYMLDIINQLINEINTIPAAALNILFAQLISGKGVRQTIGSSDSTNHGPAFQLARNIFHDSADRLQRYVCQYFSDIIFDSRDSLSDSMTTPEFIFSHNLVLQLWKYAPTTLLNIIPQFENELQAEQTSVRLVAIETVGLMLQDNAIWSDYPRVWSAFCGRLNDKSVACRIKCIEVASNALQNSLATSEIIENVVQMLQSKLADTDEKVRVATLKTIEQLTFETFKMQFSVQALKLMGDRLRDRKLNVRLQAIRTLSQIYNRAYQDLIDGVEYSIQMFSWIPSSLLEVFYVNDETTNAAVEICMAELVLQYLSSDTQTRLNRLFLSIKYFSEKAMRVFILLLQRQVKYSELLNYYIECCKNYNGGVMDNDEESITNKLKKVIDIISSKSSNPTLTEATFRKFAELNDRQSYKMLLQTFSIKSEYQVVLKSIKYLFKRVSETLSTASLECFRIFVYRSALFAFNKSNVHEIIQLLNEPVKYHNFLKPSEALLQHLPLIHPNIYGEVVIEVENIIVSSGIESDPKVIKALSQFSKRKKNFSIQTTTAEILRKLCLHGTQEQAKQAATIIAITETKEFKLDMITNIVENLEYNGGLPVRLMTLGQLFLYTLEEVEKVADQVTEFLVKKVIQRFPEKYDDTHNDEEWCTYEKLDNLTMCKVLAIRVLVNRLRAAAGGTEALNIGAPIIKLLKVLLMADGELSPFKNTPKISRAYLRLTASKYFLKLCSIPFYAEHIDFSSYVQISLLCQDENFDVRNLFLTKLQKQLQLKKLPISYYPLLFLTAVDPEEEIKTKASIWIRSQVAFFQKTHDFTMEYVATYLIHLLSHHPDISSIESENSLDFIAYIRFYVDTVVNSENVPIVFHLMQRIKQSYDVIEDGNNYIYVLSDMAQKILQVKSQNFGWSLTTYPKQIKLPYEILRPIPSIDEKKRIFNKIFITPKMESQIEHAIRTPVSSFAKQTTNKHANLKQKKTHSSKSDKKSSRRRKNEKRRKLNEQNPNIRNVPERSSSRFQGIRINYSEAPSSSEEISEEEEEISEEDFDEIEDL</sequence>